<protein>
    <recommendedName>
        <fullName>Adenylate cyclase</fullName>
        <ecNumber>4.6.1.1</ecNumber>
    </recommendedName>
    <alternativeName>
        <fullName>ATP pyrophosphate-lyase</fullName>
    </alternativeName>
    <alternativeName>
        <fullName>Adenylyl cyclase</fullName>
    </alternativeName>
</protein>
<name>CYAA_SHIFL</name>
<accession>P59739</accession>
<organism>
    <name type="scientific">Shigella flexneri</name>
    <dbReference type="NCBI Taxonomy" id="623"/>
    <lineage>
        <taxon>Bacteria</taxon>
        <taxon>Pseudomonadati</taxon>
        <taxon>Pseudomonadota</taxon>
        <taxon>Gammaproteobacteria</taxon>
        <taxon>Enterobacterales</taxon>
        <taxon>Enterobacteriaceae</taxon>
        <taxon>Shigella</taxon>
    </lineage>
</organism>
<comment type="catalytic activity">
    <reaction>
        <text>ATP = 3',5'-cyclic AMP + diphosphate</text>
        <dbReference type="Rhea" id="RHEA:15389"/>
        <dbReference type="ChEBI" id="CHEBI:30616"/>
        <dbReference type="ChEBI" id="CHEBI:33019"/>
        <dbReference type="ChEBI" id="CHEBI:58165"/>
        <dbReference type="EC" id="4.6.1.1"/>
    </reaction>
</comment>
<comment type="subcellular location">
    <subcellularLocation>
        <location evidence="1">Cytoplasm</location>
    </subcellularLocation>
</comment>
<comment type="similarity">
    <text evidence="3">Belongs to the adenylyl cyclase class-1 family.</text>
</comment>
<keyword id="KW-0067">ATP-binding</keyword>
<keyword id="KW-0115">cAMP biosynthesis</keyword>
<keyword id="KW-0963">Cytoplasm</keyword>
<keyword id="KW-0456">Lyase</keyword>
<keyword id="KW-0547">Nucleotide-binding</keyword>
<keyword id="KW-0597">Phosphoprotein</keyword>
<keyword id="KW-1185">Reference proteome</keyword>
<proteinExistence type="inferred from homology"/>
<reference key="1">
    <citation type="journal article" date="2002" name="Nucleic Acids Res.">
        <title>Genome sequence of Shigella flexneri 2a: insights into pathogenicity through comparison with genomes of Escherichia coli K12 and O157.</title>
        <authorList>
            <person name="Jin Q."/>
            <person name="Yuan Z."/>
            <person name="Xu J."/>
            <person name="Wang Y."/>
            <person name="Shen Y."/>
            <person name="Lu W."/>
            <person name="Wang J."/>
            <person name="Liu H."/>
            <person name="Yang J."/>
            <person name="Yang F."/>
            <person name="Zhang X."/>
            <person name="Zhang J."/>
            <person name="Yang G."/>
            <person name="Wu H."/>
            <person name="Qu D."/>
            <person name="Dong J."/>
            <person name="Sun L."/>
            <person name="Xue Y."/>
            <person name="Zhao A."/>
            <person name="Gao Y."/>
            <person name="Zhu J."/>
            <person name="Kan B."/>
            <person name="Ding K."/>
            <person name="Chen S."/>
            <person name="Cheng H."/>
            <person name="Yao Z."/>
            <person name="He B."/>
            <person name="Chen R."/>
            <person name="Ma D."/>
            <person name="Qiang B."/>
            <person name="Wen Y."/>
            <person name="Hou Y."/>
            <person name="Yu J."/>
        </authorList>
    </citation>
    <scope>NUCLEOTIDE SEQUENCE [LARGE SCALE GENOMIC DNA]</scope>
    <source>
        <strain>301 / Serotype 2a</strain>
    </source>
</reference>
<reference key="2">
    <citation type="journal article" date="2003" name="Infect. Immun.">
        <title>Complete genome sequence and comparative genomics of Shigella flexneri serotype 2a strain 2457T.</title>
        <authorList>
            <person name="Wei J."/>
            <person name="Goldberg M.B."/>
            <person name="Burland V."/>
            <person name="Venkatesan M.M."/>
            <person name="Deng W."/>
            <person name="Fournier G."/>
            <person name="Mayhew G.F."/>
            <person name="Plunkett G. III"/>
            <person name="Rose D.J."/>
            <person name="Darling A."/>
            <person name="Mau B."/>
            <person name="Perna N.T."/>
            <person name="Payne S.M."/>
            <person name="Runyen-Janecky L.J."/>
            <person name="Zhou S."/>
            <person name="Schwartz D.C."/>
            <person name="Blattner F.R."/>
        </authorList>
    </citation>
    <scope>NUCLEOTIDE SEQUENCE [LARGE SCALE GENOMIC DNA]</scope>
    <source>
        <strain>ATCC 700930 / 2457T / Serotype 2a</strain>
    </source>
</reference>
<sequence length="848" mass="97584">MYLYIETLKQRLDAINQLRVDRALAAMGPAFQQVYSLLPTLLHYHHPRMPGYLDGNVPKGICLYTPDETQRHYLNELELYRGMSVQDPPKGELPITGVYTMGSTSSVGQSCSSDLDIWVCHQSWLDSEERQLLQRKCSLLESWAASLGVEVSFFLIDENRFRHNESGSLGGEDCGSTQHILLLDEFYRTAVRLAGKRILWNMVPCDEEEHYDDYVMTLYAQGVLTPNEWLDLGGLSSLSAEEYFGASLWQLYKSIDSPYKAVLKTLLLEAYSWEYPNPRLLAKDIKQRLHDGEIVSFGLDPYCMMLERVTEYLTAIEDFTRLDLVRRCFYLKVCEKLSRERACVGWRRAVLSQLVSEWGWDEARLAMLDNRANWKIDQVREAHNELLDAMMQSYRNLIRFARRNNLSVSASPQDIGVLTRKLYAAFEALPGKVTLVNPQISPDLSEPNLTFIYVPPGRANRSGWYLYNRAPNIESIISHQPLEYNRYLNKLVAWAWFNGLLTSRTRLYIKGNGIVDLPKLQEMVADVSHHFPLRLPAPTPKALYSPCEIRHLAIIVNLEYDPTAAFRNQVVHFDFRKLDVFSFGENQNCLVGSVDLLYRNSWNEVRTLHFNGEQSMIEALKTILGKMHQDAAPPDSVEVFCYSQHLRGLIRTRVQQLVSECIELRLSSTRQETGRFKALRVSGQTWGLFFERLNVSVQKLENAIEFYGAISHNKLHGLSVQVETNHVKLPAVVDGFASEGIIQFFFEETQDENGFNIYILDESNRVEVYHHCEGSKEELVRDVSRFYSSSHDRFTYGSSFINFNLPQFYQIVKVDGREQVIPFRTKSIGNLPPANQDHDTPLLQQYFS</sequence>
<feature type="chain" id="PRO_0000195674" description="Adenylate cyclase">
    <location>
        <begin position="1"/>
        <end position="848"/>
    </location>
</feature>
<feature type="region of interest" description="Catalytic">
    <location>
        <begin position="1"/>
        <end position="535"/>
    </location>
</feature>
<feature type="region of interest" description="Regulatory">
    <location>
        <begin position="541"/>
        <end position="848"/>
    </location>
</feature>
<feature type="modified residue" description="Phosphohistidine; by CRR" evidence="2">
    <location>
        <position position="609"/>
    </location>
</feature>
<gene>
    <name type="primary">cyaA</name>
    <name type="ordered locus">SF3878</name>
    <name type="ordered locus">S3878</name>
</gene>
<dbReference type="EC" id="4.6.1.1"/>
<dbReference type="EMBL" id="AE005674">
    <property type="protein sequence ID" value="AAN45315.1"/>
    <property type="molecule type" value="Genomic_DNA"/>
</dbReference>
<dbReference type="EMBL" id="AE014073">
    <property type="protein sequence ID" value="AAP18883.1"/>
    <property type="molecule type" value="Genomic_DNA"/>
</dbReference>
<dbReference type="RefSeq" id="NP_709608.1">
    <property type="nucleotide sequence ID" value="NC_004337.2"/>
</dbReference>
<dbReference type="RefSeq" id="WP_000281726.1">
    <property type="nucleotide sequence ID" value="NZ_WPGW01000140.1"/>
</dbReference>
<dbReference type="STRING" id="198214.SF3878"/>
<dbReference type="PaxDb" id="198214-SF3878"/>
<dbReference type="GeneID" id="1025984"/>
<dbReference type="KEGG" id="sfl:SF3878"/>
<dbReference type="KEGG" id="sfx:S3878"/>
<dbReference type="PATRIC" id="fig|198214.7.peg.4573"/>
<dbReference type="HOGENOM" id="CLU_013280_0_0_6"/>
<dbReference type="Proteomes" id="UP000001006">
    <property type="component" value="Chromosome"/>
</dbReference>
<dbReference type="Proteomes" id="UP000002673">
    <property type="component" value="Chromosome"/>
</dbReference>
<dbReference type="GO" id="GO:0005737">
    <property type="term" value="C:cytoplasm"/>
    <property type="evidence" value="ECO:0007669"/>
    <property type="project" value="UniProtKB-SubCell"/>
</dbReference>
<dbReference type="GO" id="GO:0004016">
    <property type="term" value="F:adenylate cyclase activity"/>
    <property type="evidence" value="ECO:0007669"/>
    <property type="project" value="UniProtKB-EC"/>
</dbReference>
<dbReference type="GO" id="GO:0005524">
    <property type="term" value="F:ATP binding"/>
    <property type="evidence" value="ECO:0007669"/>
    <property type="project" value="UniProtKB-KW"/>
</dbReference>
<dbReference type="GO" id="GO:0006171">
    <property type="term" value="P:cAMP biosynthetic process"/>
    <property type="evidence" value="ECO:0007669"/>
    <property type="project" value="UniProtKB-KW"/>
</dbReference>
<dbReference type="InterPro" id="IPR000274">
    <property type="entry name" value="Adenylate_cyclase_1"/>
</dbReference>
<dbReference type="InterPro" id="IPR024686">
    <property type="entry name" value="Adenylate_cyclase_1_CS"/>
</dbReference>
<dbReference type="InterPro" id="IPR024685">
    <property type="entry name" value="Adenylate_cyclase_1_N"/>
</dbReference>
<dbReference type="NCBIfam" id="NF006977">
    <property type="entry name" value="PRK09450.1-1"/>
    <property type="match status" value="1"/>
</dbReference>
<dbReference type="NCBIfam" id="NF006978">
    <property type="entry name" value="PRK09450.1-2"/>
    <property type="match status" value="1"/>
</dbReference>
<dbReference type="NCBIfam" id="NF006979">
    <property type="entry name" value="PRK09450.1-4"/>
    <property type="match status" value="1"/>
</dbReference>
<dbReference type="PANTHER" id="PTHR38760">
    <property type="entry name" value="ADENYLATE CYCLASE"/>
    <property type="match status" value="1"/>
</dbReference>
<dbReference type="PANTHER" id="PTHR38760:SF1">
    <property type="entry name" value="ADENYLATE CYCLASE"/>
    <property type="match status" value="1"/>
</dbReference>
<dbReference type="Pfam" id="PF12633">
    <property type="entry name" value="Adenyl_cycl_N"/>
    <property type="match status" value="1"/>
</dbReference>
<dbReference type="Pfam" id="PF01295">
    <property type="entry name" value="Adenylate_cycl"/>
    <property type="match status" value="1"/>
</dbReference>
<dbReference type="PIRSF" id="PIRSF001444">
    <property type="entry name" value="Adenylate_cycl"/>
    <property type="match status" value="1"/>
</dbReference>
<dbReference type="PROSITE" id="PS01092">
    <property type="entry name" value="ADENYLATE_CYCLASE_1_1"/>
    <property type="match status" value="1"/>
</dbReference>
<dbReference type="PROSITE" id="PS01093">
    <property type="entry name" value="ADENYLATE_CYCLASE_1_2"/>
    <property type="match status" value="1"/>
</dbReference>
<evidence type="ECO:0000250" key="1"/>
<evidence type="ECO:0000255" key="2"/>
<evidence type="ECO:0000305" key="3"/>